<name>NUOB_LARHH</name>
<sequence>MGIEGVLEKGFITTSADKVLNWTRTGSLWPMTFGLACCAVEMMHAGASRYDLDRFGIVFRPSPRQSDLMIVAGTLCNKMAPALRKVYDQMAEPRWVLSMGSCANGGGYYHYSYSVVRGCDRIVPVDVYVPGCPPTAEALLYGIIQLQNKIKRTCTIAR</sequence>
<keyword id="KW-0004">4Fe-4S</keyword>
<keyword id="KW-0997">Cell inner membrane</keyword>
<keyword id="KW-1003">Cell membrane</keyword>
<keyword id="KW-0408">Iron</keyword>
<keyword id="KW-0411">Iron-sulfur</keyword>
<keyword id="KW-0472">Membrane</keyword>
<keyword id="KW-0479">Metal-binding</keyword>
<keyword id="KW-0520">NAD</keyword>
<keyword id="KW-0874">Quinone</keyword>
<keyword id="KW-1185">Reference proteome</keyword>
<keyword id="KW-1278">Translocase</keyword>
<keyword id="KW-0813">Transport</keyword>
<keyword id="KW-0830">Ubiquinone</keyword>
<dbReference type="EC" id="7.1.1.-" evidence="1"/>
<dbReference type="EMBL" id="CP001154">
    <property type="protein sequence ID" value="ACO73521.1"/>
    <property type="molecule type" value="Genomic_DNA"/>
</dbReference>
<dbReference type="RefSeq" id="WP_012696013.1">
    <property type="nucleotide sequence ID" value="NC_012559.1"/>
</dbReference>
<dbReference type="SMR" id="C1DCA4"/>
<dbReference type="STRING" id="557598.LHK_00528"/>
<dbReference type="KEGG" id="lhk:LHK_00528"/>
<dbReference type="eggNOG" id="COG0377">
    <property type="taxonomic scope" value="Bacteria"/>
</dbReference>
<dbReference type="HOGENOM" id="CLU_055737_7_3_4"/>
<dbReference type="Proteomes" id="UP000002010">
    <property type="component" value="Chromosome"/>
</dbReference>
<dbReference type="GO" id="GO:0005886">
    <property type="term" value="C:plasma membrane"/>
    <property type="evidence" value="ECO:0007669"/>
    <property type="project" value="UniProtKB-SubCell"/>
</dbReference>
<dbReference type="GO" id="GO:0045271">
    <property type="term" value="C:respiratory chain complex I"/>
    <property type="evidence" value="ECO:0007669"/>
    <property type="project" value="TreeGrafter"/>
</dbReference>
<dbReference type="GO" id="GO:0051539">
    <property type="term" value="F:4 iron, 4 sulfur cluster binding"/>
    <property type="evidence" value="ECO:0007669"/>
    <property type="project" value="UniProtKB-KW"/>
</dbReference>
<dbReference type="GO" id="GO:0005506">
    <property type="term" value="F:iron ion binding"/>
    <property type="evidence" value="ECO:0007669"/>
    <property type="project" value="UniProtKB-UniRule"/>
</dbReference>
<dbReference type="GO" id="GO:0008137">
    <property type="term" value="F:NADH dehydrogenase (ubiquinone) activity"/>
    <property type="evidence" value="ECO:0007669"/>
    <property type="project" value="InterPro"/>
</dbReference>
<dbReference type="GO" id="GO:0050136">
    <property type="term" value="F:NADH:ubiquinone reductase (non-electrogenic) activity"/>
    <property type="evidence" value="ECO:0007669"/>
    <property type="project" value="UniProtKB-UniRule"/>
</dbReference>
<dbReference type="GO" id="GO:0048038">
    <property type="term" value="F:quinone binding"/>
    <property type="evidence" value="ECO:0007669"/>
    <property type="project" value="UniProtKB-KW"/>
</dbReference>
<dbReference type="GO" id="GO:0009060">
    <property type="term" value="P:aerobic respiration"/>
    <property type="evidence" value="ECO:0007669"/>
    <property type="project" value="TreeGrafter"/>
</dbReference>
<dbReference type="GO" id="GO:0015990">
    <property type="term" value="P:electron transport coupled proton transport"/>
    <property type="evidence" value="ECO:0007669"/>
    <property type="project" value="TreeGrafter"/>
</dbReference>
<dbReference type="FunFam" id="3.40.50.12280:FF:000001">
    <property type="entry name" value="NADH-quinone oxidoreductase subunit B 2"/>
    <property type="match status" value="1"/>
</dbReference>
<dbReference type="Gene3D" id="3.40.50.12280">
    <property type="match status" value="1"/>
</dbReference>
<dbReference type="HAMAP" id="MF_01356">
    <property type="entry name" value="NDH1_NuoB"/>
    <property type="match status" value="1"/>
</dbReference>
<dbReference type="InterPro" id="IPR006137">
    <property type="entry name" value="NADH_UbQ_OxRdtase-like_20kDa"/>
</dbReference>
<dbReference type="InterPro" id="IPR006138">
    <property type="entry name" value="NADH_UQ_OxRdtase_20Kd_su"/>
</dbReference>
<dbReference type="NCBIfam" id="TIGR01957">
    <property type="entry name" value="nuoB_fam"/>
    <property type="match status" value="1"/>
</dbReference>
<dbReference type="NCBIfam" id="NF005012">
    <property type="entry name" value="PRK06411.1"/>
    <property type="match status" value="1"/>
</dbReference>
<dbReference type="PANTHER" id="PTHR11995">
    <property type="entry name" value="NADH DEHYDROGENASE"/>
    <property type="match status" value="1"/>
</dbReference>
<dbReference type="PANTHER" id="PTHR11995:SF14">
    <property type="entry name" value="NADH DEHYDROGENASE [UBIQUINONE] IRON-SULFUR PROTEIN 7, MITOCHONDRIAL"/>
    <property type="match status" value="1"/>
</dbReference>
<dbReference type="Pfam" id="PF01058">
    <property type="entry name" value="Oxidored_q6"/>
    <property type="match status" value="1"/>
</dbReference>
<dbReference type="SUPFAM" id="SSF56770">
    <property type="entry name" value="HydA/Nqo6-like"/>
    <property type="match status" value="1"/>
</dbReference>
<dbReference type="PROSITE" id="PS01150">
    <property type="entry name" value="COMPLEX1_20K"/>
    <property type="match status" value="1"/>
</dbReference>
<comment type="function">
    <text evidence="1">NDH-1 shuttles electrons from NADH, via FMN and iron-sulfur (Fe-S) centers, to quinones in the respiratory chain. The immediate electron acceptor for the enzyme in this species is believed to be ubiquinone. Couples the redox reaction to proton translocation (for every two electrons transferred, four hydrogen ions are translocated across the cytoplasmic membrane), and thus conserves the redox energy in a proton gradient.</text>
</comment>
<comment type="catalytic activity">
    <reaction evidence="1">
        <text>a quinone + NADH + 5 H(+)(in) = a quinol + NAD(+) + 4 H(+)(out)</text>
        <dbReference type="Rhea" id="RHEA:57888"/>
        <dbReference type="ChEBI" id="CHEBI:15378"/>
        <dbReference type="ChEBI" id="CHEBI:24646"/>
        <dbReference type="ChEBI" id="CHEBI:57540"/>
        <dbReference type="ChEBI" id="CHEBI:57945"/>
        <dbReference type="ChEBI" id="CHEBI:132124"/>
    </reaction>
</comment>
<comment type="cofactor">
    <cofactor evidence="1">
        <name>[4Fe-4S] cluster</name>
        <dbReference type="ChEBI" id="CHEBI:49883"/>
    </cofactor>
    <text evidence="1">Binds 1 [4Fe-4S] cluster.</text>
</comment>
<comment type="subunit">
    <text evidence="1">NDH-1 is composed of 14 different subunits. Subunits NuoB, C, D, E, F, and G constitute the peripheral sector of the complex.</text>
</comment>
<comment type="subcellular location">
    <subcellularLocation>
        <location evidence="1">Cell inner membrane</location>
        <topology evidence="1">Peripheral membrane protein</topology>
        <orientation evidence="1">Cytoplasmic side</orientation>
    </subcellularLocation>
</comment>
<comment type="similarity">
    <text evidence="1">Belongs to the complex I 20 kDa subunit family.</text>
</comment>
<accession>C1DCA4</accession>
<protein>
    <recommendedName>
        <fullName evidence="1">NADH-quinone oxidoreductase subunit B</fullName>
        <ecNumber evidence="1">7.1.1.-</ecNumber>
    </recommendedName>
    <alternativeName>
        <fullName evidence="1">NADH dehydrogenase I subunit B</fullName>
    </alternativeName>
    <alternativeName>
        <fullName evidence="1">NDH-1 subunit B</fullName>
    </alternativeName>
</protein>
<organism>
    <name type="scientific">Laribacter hongkongensis (strain HLHK9)</name>
    <dbReference type="NCBI Taxonomy" id="557598"/>
    <lineage>
        <taxon>Bacteria</taxon>
        <taxon>Pseudomonadati</taxon>
        <taxon>Pseudomonadota</taxon>
        <taxon>Betaproteobacteria</taxon>
        <taxon>Neisseriales</taxon>
        <taxon>Aquaspirillaceae</taxon>
        <taxon>Laribacter</taxon>
    </lineage>
</organism>
<gene>
    <name evidence="1" type="primary">nuoB</name>
    <name type="ordered locus">LHK_00528</name>
</gene>
<feature type="chain" id="PRO_1000166658" description="NADH-quinone oxidoreductase subunit B">
    <location>
        <begin position="1"/>
        <end position="158"/>
    </location>
</feature>
<feature type="binding site" evidence="1">
    <location>
        <position position="37"/>
    </location>
    <ligand>
        <name>[4Fe-4S] cluster</name>
        <dbReference type="ChEBI" id="CHEBI:49883"/>
    </ligand>
</feature>
<feature type="binding site" evidence="1">
    <location>
        <position position="38"/>
    </location>
    <ligand>
        <name>[4Fe-4S] cluster</name>
        <dbReference type="ChEBI" id="CHEBI:49883"/>
    </ligand>
</feature>
<feature type="binding site" evidence="1">
    <location>
        <position position="102"/>
    </location>
    <ligand>
        <name>[4Fe-4S] cluster</name>
        <dbReference type="ChEBI" id="CHEBI:49883"/>
    </ligand>
</feature>
<feature type="binding site" evidence="1">
    <location>
        <position position="132"/>
    </location>
    <ligand>
        <name>[4Fe-4S] cluster</name>
        <dbReference type="ChEBI" id="CHEBI:49883"/>
    </ligand>
</feature>
<reference key="1">
    <citation type="journal article" date="2009" name="PLoS Genet.">
        <title>The complete genome and proteome of Laribacter hongkongensis reveal potential mechanisms for adaptations to different temperatures and habitats.</title>
        <authorList>
            <person name="Woo P.C.Y."/>
            <person name="Lau S.K.P."/>
            <person name="Tse H."/>
            <person name="Teng J.L.L."/>
            <person name="Curreem S.O."/>
            <person name="Tsang A.K.L."/>
            <person name="Fan R.Y.Y."/>
            <person name="Wong G.K.M."/>
            <person name="Huang Y."/>
            <person name="Loman N.J."/>
            <person name="Snyder L.A.S."/>
            <person name="Cai J.J."/>
            <person name="Huang J.-D."/>
            <person name="Mak W."/>
            <person name="Pallen M.J."/>
            <person name="Lok S."/>
            <person name="Yuen K.-Y."/>
        </authorList>
    </citation>
    <scope>NUCLEOTIDE SEQUENCE [LARGE SCALE GENOMIC DNA]</scope>
    <source>
        <strain>HLHK9</strain>
    </source>
</reference>
<proteinExistence type="inferred from homology"/>
<evidence type="ECO:0000255" key="1">
    <source>
        <dbReference type="HAMAP-Rule" id="MF_01356"/>
    </source>
</evidence>